<dbReference type="EC" id="3.6.5.3" evidence="2"/>
<dbReference type="EMBL" id="CP000448">
    <property type="protein sequence ID" value="ABI69641.1"/>
    <property type="molecule type" value="Genomic_DNA"/>
</dbReference>
<dbReference type="RefSeq" id="WP_011641725.1">
    <property type="nucleotide sequence ID" value="NC_008346.1"/>
</dbReference>
<dbReference type="SMR" id="Q0AUG3"/>
<dbReference type="STRING" id="335541.Swol_2350"/>
<dbReference type="KEGG" id="swo:Swol_2350"/>
<dbReference type="eggNOG" id="COG0050">
    <property type="taxonomic scope" value="Bacteria"/>
</dbReference>
<dbReference type="HOGENOM" id="CLU_007265_0_1_9"/>
<dbReference type="OrthoDB" id="9804504at2"/>
<dbReference type="Proteomes" id="UP000001968">
    <property type="component" value="Chromosome"/>
</dbReference>
<dbReference type="GO" id="GO:0005829">
    <property type="term" value="C:cytosol"/>
    <property type="evidence" value="ECO:0007669"/>
    <property type="project" value="TreeGrafter"/>
</dbReference>
<dbReference type="GO" id="GO:0005525">
    <property type="term" value="F:GTP binding"/>
    <property type="evidence" value="ECO:0007669"/>
    <property type="project" value="UniProtKB-UniRule"/>
</dbReference>
<dbReference type="GO" id="GO:0003924">
    <property type="term" value="F:GTPase activity"/>
    <property type="evidence" value="ECO:0007669"/>
    <property type="project" value="InterPro"/>
</dbReference>
<dbReference type="GO" id="GO:0003746">
    <property type="term" value="F:translation elongation factor activity"/>
    <property type="evidence" value="ECO:0007669"/>
    <property type="project" value="UniProtKB-UniRule"/>
</dbReference>
<dbReference type="CDD" id="cd01884">
    <property type="entry name" value="EF_Tu"/>
    <property type="match status" value="1"/>
</dbReference>
<dbReference type="CDD" id="cd03697">
    <property type="entry name" value="EFTU_II"/>
    <property type="match status" value="1"/>
</dbReference>
<dbReference type="CDD" id="cd03707">
    <property type="entry name" value="EFTU_III"/>
    <property type="match status" value="1"/>
</dbReference>
<dbReference type="FunFam" id="2.40.30.10:FF:000001">
    <property type="entry name" value="Elongation factor Tu"/>
    <property type="match status" value="1"/>
</dbReference>
<dbReference type="FunFam" id="3.40.50.300:FF:000003">
    <property type="entry name" value="Elongation factor Tu"/>
    <property type="match status" value="1"/>
</dbReference>
<dbReference type="Gene3D" id="3.40.50.300">
    <property type="entry name" value="P-loop containing nucleotide triphosphate hydrolases"/>
    <property type="match status" value="1"/>
</dbReference>
<dbReference type="Gene3D" id="2.40.30.10">
    <property type="entry name" value="Translation factors"/>
    <property type="match status" value="2"/>
</dbReference>
<dbReference type="HAMAP" id="MF_00118_B">
    <property type="entry name" value="EF_Tu_B"/>
    <property type="match status" value="1"/>
</dbReference>
<dbReference type="InterPro" id="IPR041709">
    <property type="entry name" value="EF-Tu_GTP-bd"/>
</dbReference>
<dbReference type="InterPro" id="IPR050055">
    <property type="entry name" value="EF-Tu_GTPase"/>
</dbReference>
<dbReference type="InterPro" id="IPR004161">
    <property type="entry name" value="EFTu-like_2"/>
</dbReference>
<dbReference type="InterPro" id="IPR033720">
    <property type="entry name" value="EFTU_2"/>
</dbReference>
<dbReference type="InterPro" id="IPR031157">
    <property type="entry name" value="G_TR_CS"/>
</dbReference>
<dbReference type="InterPro" id="IPR027417">
    <property type="entry name" value="P-loop_NTPase"/>
</dbReference>
<dbReference type="InterPro" id="IPR005225">
    <property type="entry name" value="Small_GTP-bd"/>
</dbReference>
<dbReference type="InterPro" id="IPR000795">
    <property type="entry name" value="T_Tr_GTP-bd_dom"/>
</dbReference>
<dbReference type="InterPro" id="IPR009000">
    <property type="entry name" value="Transl_B-barrel_sf"/>
</dbReference>
<dbReference type="InterPro" id="IPR009001">
    <property type="entry name" value="Transl_elong_EF1A/Init_IF2_C"/>
</dbReference>
<dbReference type="InterPro" id="IPR004541">
    <property type="entry name" value="Transl_elong_EFTu/EF1A_bac/org"/>
</dbReference>
<dbReference type="InterPro" id="IPR004160">
    <property type="entry name" value="Transl_elong_EFTu/EF1A_C"/>
</dbReference>
<dbReference type="NCBIfam" id="TIGR00485">
    <property type="entry name" value="EF-Tu"/>
    <property type="match status" value="1"/>
</dbReference>
<dbReference type="NCBIfam" id="NF000766">
    <property type="entry name" value="PRK00049.1"/>
    <property type="match status" value="1"/>
</dbReference>
<dbReference type="NCBIfam" id="NF009372">
    <property type="entry name" value="PRK12735.1"/>
    <property type="match status" value="1"/>
</dbReference>
<dbReference type="NCBIfam" id="NF009373">
    <property type="entry name" value="PRK12736.1"/>
    <property type="match status" value="1"/>
</dbReference>
<dbReference type="NCBIfam" id="TIGR00231">
    <property type="entry name" value="small_GTP"/>
    <property type="match status" value="1"/>
</dbReference>
<dbReference type="PANTHER" id="PTHR43721:SF22">
    <property type="entry name" value="ELONGATION FACTOR TU, MITOCHONDRIAL"/>
    <property type="match status" value="1"/>
</dbReference>
<dbReference type="PANTHER" id="PTHR43721">
    <property type="entry name" value="ELONGATION FACTOR TU-RELATED"/>
    <property type="match status" value="1"/>
</dbReference>
<dbReference type="Pfam" id="PF00009">
    <property type="entry name" value="GTP_EFTU"/>
    <property type="match status" value="1"/>
</dbReference>
<dbReference type="Pfam" id="PF03144">
    <property type="entry name" value="GTP_EFTU_D2"/>
    <property type="match status" value="1"/>
</dbReference>
<dbReference type="Pfam" id="PF03143">
    <property type="entry name" value="GTP_EFTU_D3"/>
    <property type="match status" value="1"/>
</dbReference>
<dbReference type="PRINTS" id="PR00315">
    <property type="entry name" value="ELONGATNFCT"/>
</dbReference>
<dbReference type="SUPFAM" id="SSF50465">
    <property type="entry name" value="EF-Tu/eEF-1alpha/eIF2-gamma C-terminal domain"/>
    <property type="match status" value="1"/>
</dbReference>
<dbReference type="SUPFAM" id="SSF52540">
    <property type="entry name" value="P-loop containing nucleoside triphosphate hydrolases"/>
    <property type="match status" value="1"/>
</dbReference>
<dbReference type="SUPFAM" id="SSF50447">
    <property type="entry name" value="Translation proteins"/>
    <property type="match status" value="1"/>
</dbReference>
<dbReference type="PROSITE" id="PS00301">
    <property type="entry name" value="G_TR_1"/>
    <property type="match status" value="1"/>
</dbReference>
<dbReference type="PROSITE" id="PS51722">
    <property type="entry name" value="G_TR_2"/>
    <property type="match status" value="1"/>
</dbReference>
<reference key="1">
    <citation type="journal article" date="2010" name="Environ. Microbiol.">
        <title>The genome of Syntrophomonas wolfei: new insights into syntrophic metabolism and biohydrogen production.</title>
        <authorList>
            <person name="Sieber J.R."/>
            <person name="Sims D.R."/>
            <person name="Han C."/>
            <person name="Kim E."/>
            <person name="Lykidis A."/>
            <person name="Lapidus A.L."/>
            <person name="McDonnald E."/>
            <person name="Rohlin L."/>
            <person name="Culley D.E."/>
            <person name="Gunsalus R."/>
            <person name="McInerney M.J."/>
        </authorList>
    </citation>
    <scope>NUCLEOTIDE SEQUENCE [LARGE SCALE GENOMIC DNA]</scope>
    <source>
        <strain>DSM 2245B / Goettingen</strain>
    </source>
</reference>
<feature type="chain" id="PRO_0000337561" description="Elongation factor Tu 2">
    <location>
        <begin position="1"/>
        <end position="400"/>
    </location>
</feature>
<feature type="domain" description="tr-type G">
    <location>
        <begin position="10"/>
        <end position="209"/>
    </location>
</feature>
<feature type="region of interest" description="G1" evidence="1">
    <location>
        <begin position="19"/>
        <end position="26"/>
    </location>
</feature>
<feature type="region of interest" description="G2" evidence="1">
    <location>
        <begin position="60"/>
        <end position="64"/>
    </location>
</feature>
<feature type="region of interest" description="G3" evidence="1">
    <location>
        <begin position="81"/>
        <end position="84"/>
    </location>
</feature>
<feature type="region of interest" description="G4" evidence="1">
    <location>
        <begin position="136"/>
        <end position="139"/>
    </location>
</feature>
<feature type="region of interest" description="G5" evidence="1">
    <location>
        <begin position="174"/>
        <end position="176"/>
    </location>
</feature>
<feature type="binding site" evidence="2">
    <location>
        <begin position="19"/>
        <end position="26"/>
    </location>
    <ligand>
        <name>GTP</name>
        <dbReference type="ChEBI" id="CHEBI:37565"/>
    </ligand>
</feature>
<feature type="binding site" evidence="2">
    <location>
        <position position="26"/>
    </location>
    <ligand>
        <name>Mg(2+)</name>
        <dbReference type="ChEBI" id="CHEBI:18420"/>
    </ligand>
</feature>
<feature type="binding site" evidence="2">
    <location>
        <begin position="81"/>
        <end position="85"/>
    </location>
    <ligand>
        <name>GTP</name>
        <dbReference type="ChEBI" id="CHEBI:37565"/>
    </ligand>
</feature>
<feature type="binding site" evidence="2">
    <location>
        <begin position="136"/>
        <end position="139"/>
    </location>
    <ligand>
        <name>GTP</name>
        <dbReference type="ChEBI" id="CHEBI:37565"/>
    </ligand>
</feature>
<comment type="function">
    <text evidence="2">GTP hydrolase that promotes the GTP-dependent binding of aminoacyl-tRNA to the A-site of ribosomes during protein biosynthesis.</text>
</comment>
<comment type="catalytic activity">
    <reaction evidence="2">
        <text>GTP + H2O = GDP + phosphate + H(+)</text>
        <dbReference type="Rhea" id="RHEA:19669"/>
        <dbReference type="ChEBI" id="CHEBI:15377"/>
        <dbReference type="ChEBI" id="CHEBI:15378"/>
        <dbReference type="ChEBI" id="CHEBI:37565"/>
        <dbReference type="ChEBI" id="CHEBI:43474"/>
        <dbReference type="ChEBI" id="CHEBI:58189"/>
        <dbReference type="EC" id="3.6.5.3"/>
    </reaction>
    <physiologicalReaction direction="left-to-right" evidence="2">
        <dbReference type="Rhea" id="RHEA:19670"/>
    </physiologicalReaction>
</comment>
<comment type="subunit">
    <text evidence="2">Monomer.</text>
</comment>
<comment type="subcellular location">
    <subcellularLocation>
        <location evidence="2">Cytoplasm</location>
    </subcellularLocation>
</comment>
<comment type="similarity">
    <text evidence="2">Belongs to the TRAFAC class translation factor GTPase superfamily. Classic translation factor GTPase family. EF-Tu/EF-1A subfamily.</text>
</comment>
<organism>
    <name type="scientific">Syntrophomonas wolfei subsp. wolfei (strain DSM 2245B / Goettingen)</name>
    <dbReference type="NCBI Taxonomy" id="335541"/>
    <lineage>
        <taxon>Bacteria</taxon>
        <taxon>Bacillati</taxon>
        <taxon>Bacillota</taxon>
        <taxon>Clostridia</taxon>
        <taxon>Eubacteriales</taxon>
        <taxon>Syntrophomonadaceae</taxon>
        <taxon>Syntrophomonas</taxon>
    </lineage>
</organism>
<proteinExistence type="inferred from homology"/>
<sequence>MAKAKYERTKPHLNIGTIGHIDHGKTTLTAAITKTLSQVGGAKATSYEEIDKAPEERERGITINTSHVEYQTETRHYAHVDCPGHADYIKNMITGAAQMDGSILVVSAADGPMPQTREHILLSRQVGVPYIVVFMNKIDMVDDPELLELVEMEVRELLSFYEFPGDDIPVLMGSALKALECGCGTRECEWCKHIWELMDAVDSYIPLPQRAVDKPFLMPIEDVFTITGRGTVTTGRVERGQVKVGDEVEIVGMREATRKTVCTGVEMFRKLLDYAEAGDNIGTLLRGVDRKEVERGMVLAKPGSIKPLTAFNAEVYVLTKEEGGRHTPFFGGYRPQFYFRTTDVTGIIQLPEGVEMVMPGDNVQMAIELITPIAIEEGLRFAIREGGRTVGAGVVTSLNE</sequence>
<keyword id="KW-0963">Cytoplasm</keyword>
<keyword id="KW-0251">Elongation factor</keyword>
<keyword id="KW-0342">GTP-binding</keyword>
<keyword id="KW-0378">Hydrolase</keyword>
<keyword id="KW-0460">Magnesium</keyword>
<keyword id="KW-0479">Metal-binding</keyword>
<keyword id="KW-0547">Nucleotide-binding</keyword>
<keyword id="KW-0648">Protein biosynthesis</keyword>
<keyword id="KW-1185">Reference proteome</keyword>
<name>EFTU2_SYNWW</name>
<gene>
    <name evidence="2" type="primary">tuf2</name>
    <name type="ordered locus">Swol_2350</name>
</gene>
<protein>
    <recommendedName>
        <fullName evidence="2">Elongation factor Tu 2</fullName>
        <shortName evidence="2">EF-Tu 2</shortName>
        <ecNumber evidence="2">3.6.5.3</ecNumber>
    </recommendedName>
</protein>
<evidence type="ECO:0000250" key="1"/>
<evidence type="ECO:0000255" key="2">
    <source>
        <dbReference type="HAMAP-Rule" id="MF_00118"/>
    </source>
</evidence>
<accession>Q0AUG3</accession>